<reference key="1">
    <citation type="submission" date="2001-07" db="EMBL/GenBank/DDBJ databases">
        <title>Genome-wide discovery and analysis of human seven transmembrane helix receptor genes.</title>
        <authorList>
            <person name="Suwa M."/>
            <person name="Sato T."/>
            <person name="Okouchi I."/>
            <person name="Arita M."/>
            <person name="Futami K."/>
            <person name="Matsumoto S."/>
            <person name="Tsutsumi S."/>
            <person name="Aburatani H."/>
            <person name="Asai K."/>
            <person name="Akiyama Y."/>
        </authorList>
    </citation>
    <scope>NUCLEOTIDE SEQUENCE [GENOMIC DNA]</scope>
</reference>
<reference key="2">
    <citation type="submission" date="2005-07" db="EMBL/GenBank/DDBJ databases">
        <authorList>
            <person name="Mural R.J."/>
            <person name="Istrail S."/>
            <person name="Sutton G.G."/>
            <person name="Florea L."/>
            <person name="Halpern A.L."/>
            <person name="Mobarry C.M."/>
            <person name="Lippert R."/>
            <person name="Walenz B."/>
            <person name="Shatkay H."/>
            <person name="Dew I."/>
            <person name="Miller J.R."/>
            <person name="Flanigan M.J."/>
            <person name="Edwards N.J."/>
            <person name="Bolanos R."/>
            <person name="Fasulo D."/>
            <person name="Halldorsson B.V."/>
            <person name="Hannenhalli S."/>
            <person name="Turner R."/>
            <person name="Yooseph S."/>
            <person name="Lu F."/>
            <person name="Nusskern D.R."/>
            <person name="Shue B.C."/>
            <person name="Zheng X.H."/>
            <person name="Zhong F."/>
            <person name="Delcher A.L."/>
            <person name="Huson D.H."/>
            <person name="Kravitz S.A."/>
            <person name="Mouchard L."/>
            <person name="Reinert K."/>
            <person name="Remington K.A."/>
            <person name="Clark A.G."/>
            <person name="Waterman M.S."/>
            <person name="Eichler E.E."/>
            <person name="Adams M.D."/>
            <person name="Hunkapiller M.W."/>
            <person name="Myers E.W."/>
            <person name="Venter J.C."/>
        </authorList>
    </citation>
    <scope>NUCLEOTIDE SEQUENCE [LARGE SCALE GENOMIC DNA]</scope>
</reference>
<reference key="3">
    <citation type="journal article" date="2002" name="Genomics">
        <title>DEFOG: a practical scheme for deciphering families of genes.</title>
        <authorList>
            <person name="Fuchs T."/>
            <person name="Malecova B."/>
            <person name="Linhart C."/>
            <person name="Sharan R."/>
            <person name="Khen M."/>
            <person name="Herwig R."/>
            <person name="Shmulevich D."/>
            <person name="Elkon R."/>
            <person name="Steinfath M."/>
            <person name="O'Brien J.K."/>
            <person name="Radelof U."/>
            <person name="Lehrach H."/>
            <person name="Lancet D."/>
            <person name="Shamir R."/>
        </authorList>
    </citation>
    <scope>NUCLEOTIDE SEQUENCE [GENOMIC DNA] OF 68-282</scope>
</reference>
<reference key="4">
    <citation type="journal article" date="2004" name="Proc. Natl. Acad. Sci. U.S.A.">
        <title>The human olfactory receptor gene family.</title>
        <authorList>
            <person name="Malnic B."/>
            <person name="Godfrey P.A."/>
            <person name="Buck L.B."/>
        </authorList>
    </citation>
    <scope>IDENTIFICATION</scope>
</reference>
<proteinExistence type="inferred from homology"/>
<name>OR8B2_HUMAN</name>
<dbReference type="EMBL" id="AB065826">
    <property type="protein sequence ID" value="BAC06045.1"/>
    <property type="molecule type" value="Genomic_DNA"/>
</dbReference>
<dbReference type="EMBL" id="CH471065">
    <property type="protein sequence ID" value="EAW67580.1"/>
    <property type="molecule type" value="Genomic_DNA"/>
</dbReference>
<dbReference type="EMBL" id="AF399508">
    <property type="protein sequence ID" value="AAK94993.1"/>
    <property type="molecule type" value="Genomic_DNA"/>
</dbReference>
<dbReference type="EMBL" id="BK004500">
    <property type="protein sequence ID" value="DAA04898.1"/>
    <property type="molecule type" value="Genomic_DNA"/>
</dbReference>
<dbReference type="CCDS" id="CCDS31708.1"/>
<dbReference type="RefSeq" id="NP_001005468.1">
    <property type="nucleotide sequence ID" value="NM_001005468.2"/>
</dbReference>
<dbReference type="RefSeq" id="XP_016873024.1">
    <property type="nucleotide sequence ID" value="XM_017017535.3"/>
</dbReference>
<dbReference type="RefSeq" id="XP_016873025.1">
    <property type="nucleotide sequence ID" value="XM_017017536.2"/>
</dbReference>
<dbReference type="RefSeq" id="XP_054224387.1">
    <property type="nucleotide sequence ID" value="XM_054368412.1"/>
</dbReference>
<dbReference type="RefSeq" id="XP_054224388.1">
    <property type="nucleotide sequence ID" value="XM_054368413.1"/>
</dbReference>
<dbReference type="SMR" id="Q96RD0"/>
<dbReference type="BioGRID" id="117761">
    <property type="interactions" value="1"/>
</dbReference>
<dbReference type="FunCoup" id="Q96RD0">
    <property type="interactions" value="418"/>
</dbReference>
<dbReference type="STRING" id="9606.ENSP00000493235"/>
<dbReference type="GlyCosmos" id="Q96RD0">
    <property type="glycosylation" value="1 site, No reported glycans"/>
</dbReference>
<dbReference type="GlyGen" id="Q96RD0">
    <property type="glycosylation" value="1 site"/>
</dbReference>
<dbReference type="BioMuta" id="OR8B2"/>
<dbReference type="DMDM" id="229462942"/>
<dbReference type="MassIVE" id="Q96RD0"/>
<dbReference type="PaxDb" id="9606-ENSP00000364152"/>
<dbReference type="Antibodypedia" id="78415">
    <property type="antibodies" value="16 antibodies from 8 providers"/>
</dbReference>
<dbReference type="DNASU" id="26595"/>
<dbReference type="Ensembl" id="ENST00000641451.2">
    <property type="protein sequence ID" value="ENSP00000493235.1"/>
    <property type="gene ID" value="ENSG00000284680.3"/>
</dbReference>
<dbReference type="GeneID" id="26595"/>
<dbReference type="KEGG" id="hsa:26595"/>
<dbReference type="MANE-Select" id="ENST00000641451.2">
    <property type="protein sequence ID" value="ENSP00000493235.1"/>
    <property type="RefSeq nucleotide sequence ID" value="NM_001005468.2"/>
    <property type="RefSeq protein sequence ID" value="NP_001005468.1"/>
</dbReference>
<dbReference type="UCSC" id="uc010sai.3">
    <property type="organism name" value="human"/>
</dbReference>
<dbReference type="AGR" id="HGNC:8471"/>
<dbReference type="CTD" id="26595"/>
<dbReference type="GeneCards" id="OR8B2"/>
<dbReference type="HGNC" id="HGNC:8471">
    <property type="gene designation" value="OR8B2"/>
</dbReference>
<dbReference type="HPA" id="ENSG00000284680">
    <property type="expression patterns" value="Tissue enriched (testis)"/>
</dbReference>
<dbReference type="neXtProt" id="NX_Q96RD0"/>
<dbReference type="PharmGKB" id="PA32750"/>
<dbReference type="VEuPathDB" id="HostDB:ENSG00000284680"/>
<dbReference type="eggNOG" id="ENOG502RTZT">
    <property type="taxonomic scope" value="Eukaryota"/>
</dbReference>
<dbReference type="GeneTree" id="ENSGT01010000222320"/>
<dbReference type="HOGENOM" id="CLU_012526_5_5_1"/>
<dbReference type="InParanoid" id="Q96RD0"/>
<dbReference type="OMA" id="FQQPFFF"/>
<dbReference type="OrthoDB" id="9829559at2759"/>
<dbReference type="PAN-GO" id="Q96RD0">
    <property type="GO annotations" value="4 GO annotations based on evolutionary models"/>
</dbReference>
<dbReference type="PhylomeDB" id="Q96RD0"/>
<dbReference type="TreeFam" id="TF352753"/>
<dbReference type="PathwayCommons" id="Q96RD0"/>
<dbReference type="Reactome" id="R-HSA-9752946">
    <property type="pathway name" value="Expression and translocation of olfactory receptors"/>
</dbReference>
<dbReference type="BioGRID-ORCS" id="26595">
    <property type="hits" value="7 hits in 639 CRISPR screens"/>
</dbReference>
<dbReference type="GeneWiki" id="OR8B2"/>
<dbReference type="GenomeRNAi" id="26595"/>
<dbReference type="Pharos" id="Q96RD0">
    <property type="development level" value="Tdark"/>
</dbReference>
<dbReference type="PRO" id="PR:Q96RD0"/>
<dbReference type="Proteomes" id="UP000005640">
    <property type="component" value="Chromosome 11"/>
</dbReference>
<dbReference type="RNAct" id="Q96RD0">
    <property type="molecule type" value="protein"/>
</dbReference>
<dbReference type="Bgee" id="ENSG00000284680">
    <property type="expression patterns" value="Expressed in male germ line stem cell (sensu Vertebrata) in testis and 2 other cell types or tissues"/>
</dbReference>
<dbReference type="ExpressionAtlas" id="Q96RD0">
    <property type="expression patterns" value="baseline and differential"/>
</dbReference>
<dbReference type="GO" id="GO:0005886">
    <property type="term" value="C:plasma membrane"/>
    <property type="evidence" value="ECO:0007669"/>
    <property type="project" value="UniProtKB-SubCell"/>
</dbReference>
<dbReference type="GO" id="GO:0004930">
    <property type="term" value="F:G protein-coupled receptor activity"/>
    <property type="evidence" value="ECO:0007669"/>
    <property type="project" value="UniProtKB-KW"/>
</dbReference>
<dbReference type="GO" id="GO:0005549">
    <property type="term" value="F:odorant binding"/>
    <property type="evidence" value="ECO:0000318"/>
    <property type="project" value="GO_Central"/>
</dbReference>
<dbReference type="GO" id="GO:0004984">
    <property type="term" value="F:olfactory receptor activity"/>
    <property type="evidence" value="ECO:0000318"/>
    <property type="project" value="GO_Central"/>
</dbReference>
<dbReference type="GO" id="GO:0007186">
    <property type="term" value="P:G protein-coupled receptor signaling pathway"/>
    <property type="evidence" value="ECO:0000318"/>
    <property type="project" value="GO_Central"/>
</dbReference>
<dbReference type="GO" id="GO:0007608">
    <property type="term" value="P:sensory perception of smell"/>
    <property type="evidence" value="ECO:0000318"/>
    <property type="project" value="GO_Central"/>
</dbReference>
<dbReference type="CDD" id="cd15405">
    <property type="entry name" value="7tmA_OR8B-like"/>
    <property type="match status" value="1"/>
</dbReference>
<dbReference type="FunFam" id="1.20.1070.10:FF:000004">
    <property type="entry name" value="Olfactory receptor"/>
    <property type="match status" value="1"/>
</dbReference>
<dbReference type="Gene3D" id="1.20.1070.10">
    <property type="entry name" value="Rhodopsin 7-helix transmembrane proteins"/>
    <property type="match status" value="1"/>
</dbReference>
<dbReference type="InterPro" id="IPR000276">
    <property type="entry name" value="GPCR_Rhodpsn"/>
</dbReference>
<dbReference type="InterPro" id="IPR017452">
    <property type="entry name" value="GPCR_Rhodpsn_7TM"/>
</dbReference>
<dbReference type="InterPro" id="IPR000725">
    <property type="entry name" value="Olfact_rcpt"/>
</dbReference>
<dbReference type="PANTHER" id="PTHR48018">
    <property type="entry name" value="OLFACTORY RECEPTOR"/>
    <property type="match status" value="1"/>
</dbReference>
<dbReference type="Pfam" id="PF13853">
    <property type="entry name" value="7tm_4"/>
    <property type="match status" value="1"/>
</dbReference>
<dbReference type="PRINTS" id="PR00237">
    <property type="entry name" value="GPCRRHODOPSN"/>
</dbReference>
<dbReference type="PRINTS" id="PR00245">
    <property type="entry name" value="OLFACTORYR"/>
</dbReference>
<dbReference type="SUPFAM" id="SSF81321">
    <property type="entry name" value="Family A G protein-coupled receptor-like"/>
    <property type="match status" value="1"/>
</dbReference>
<dbReference type="PROSITE" id="PS00237">
    <property type="entry name" value="G_PROTEIN_RECEP_F1_1"/>
    <property type="match status" value="1"/>
</dbReference>
<dbReference type="PROSITE" id="PS50262">
    <property type="entry name" value="G_PROTEIN_RECEP_F1_2"/>
    <property type="match status" value="1"/>
</dbReference>
<comment type="function">
    <text evidence="3">Odorant receptor.</text>
</comment>
<comment type="subcellular location">
    <subcellularLocation>
        <location>Cell membrane</location>
        <topology>Multi-pass membrane protein</topology>
    </subcellularLocation>
</comment>
<comment type="similarity">
    <text evidence="2">Belongs to the G-protein coupled receptor 1 family.</text>
</comment>
<comment type="online information" name="Human Olfactory Receptor Data Exploratorium (HORDE)">
    <link uri="http://genome.weizmann.ac.il/horde/card/index/symbol:OR8B2"/>
</comment>
<feature type="chain" id="PRO_0000150654" description="Olfactory receptor 8B2">
    <location>
        <begin position="1"/>
        <end position="313"/>
    </location>
</feature>
<feature type="topological domain" description="Extracellular" evidence="1">
    <location>
        <begin position="1"/>
        <end position="25"/>
    </location>
</feature>
<feature type="transmembrane region" description="Helical; Name=1" evidence="1">
    <location>
        <begin position="26"/>
        <end position="46"/>
    </location>
</feature>
<feature type="topological domain" description="Cytoplasmic" evidence="1">
    <location>
        <begin position="47"/>
        <end position="54"/>
    </location>
</feature>
<feature type="transmembrane region" description="Helical; Name=2" evidence="1">
    <location>
        <begin position="55"/>
        <end position="75"/>
    </location>
</feature>
<feature type="topological domain" description="Extracellular" evidence="1">
    <location>
        <begin position="76"/>
        <end position="99"/>
    </location>
</feature>
<feature type="transmembrane region" description="Helical; Name=3" evidence="1">
    <location>
        <begin position="100"/>
        <end position="120"/>
    </location>
</feature>
<feature type="topological domain" description="Cytoplasmic" evidence="1">
    <location>
        <begin position="121"/>
        <end position="139"/>
    </location>
</feature>
<feature type="transmembrane region" description="Helical; Name=4" evidence="1">
    <location>
        <begin position="140"/>
        <end position="160"/>
    </location>
</feature>
<feature type="topological domain" description="Extracellular" evidence="1">
    <location>
        <begin position="161"/>
        <end position="197"/>
    </location>
</feature>
<feature type="transmembrane region" description="Helical; Name=5" evidence="1">
    <location>
        <begin position="198"/>
        <end position="217"/>
    </location>
</feature>
<feature type="topological domain" description="Cytoplasmic" evidence="1">
    <location>
        <begin position="218"/>
        <end position="237"/>
    </location>
</feature>
<feature type="transmembrane region" description="Helical; Name=6" evidence="1">
    <location>
        <begin position="238"/>
        <end position="258"/>
    </location>
</feature>
<feature type="topological domain" description="Extracellular" evidence="1">
    <location>
        <begin position="259"/>
        <end position="270"/>
    </location>
</feature>
<feature type="transmembrane region" description="Helical; Name=7" evidence="1">
    <location>
        <begin position="271"/>
        <end position="291"/>
    </location>
</feature>
<feature type="topological domain" description="Cytoplasmic" evidence="1">
    <location>
        <begin position="292"/>
        <end position="313"/>
    </location>
</feature>
<feature type="glycosylation site" description="N-linked (GlcNAc...) asparagine" evidence="1">
    <location>
        <position position="5"/>
    </location>
</feature>
<feature type="disulfide bond" evidence="2">
    <location>
        <begin position="97"/>
        <end position="189"/>
    </location>
</feature>
<feature type="sequence variant" id="VAR_062058" description="In dbSNP:rs28373946.">
    <original>H</original>
    <variation>R</variation>
    <location>
        <position position="20"/>
    </location>
</feature>
<feature type="sequence variant" id="VAR_055147" description="In dbSNP:rs530740.">
    <original>L</original>
    <variation>F</variation>
    <location>
        <position position="27"/>
    </location>
</feature>
<feature type="sequence variant" id="VAR_060011" description="In dbSNP:rs886202.">
    <original>L</original>
    <variation>F</variation>
    <location>
        <position position="164"/>
    </location>
</feature>
<feature type="sequence variant" id="VAR_062059" description="In dbSNP:rs503220.">
    <original>S</original>
    <variation>F</variation>
    <location>
        <position position="273"/>
    </location>
</feature>
<organism>
    <name type="scientific">Homo sapiens</name>
    <name type="common">Human</name>
    <dbReference type="NCBI Taxonomy" id="9606"/>
    <lineage>
        <taxon>Eukaryota</taxon>
        <taxon>Metazoa</taxon>
        <taxon>Chordata</taxon>
        <taxon>Craniata</taxon>
        <taxon>Vertebrata</taxon>
        <taxon>Euteleostomi</taxon>
        <taxon>Mammalia</taxon>
        <taxon>Eutheria</taxon>
        <taxon>Euarchontoglires</taxon>
        <taxon>Primates</taxon>
        <taxon>Haplorrhini</taxon>
        <taxon>Catarrhini</taxon>
        <taxon>Hominidae</taxon>
        <taxon>Homo</taxon>
    </lineage>
</organism>
<sequence>MLARNNSLVTEFILAGLTDHPEFRQPLFFLFLVIYIVTMVGNLGLITLFGLNSHLHTPMYYFLFNLSFIDLCYSSVFTPKMLMNFVSKKNIISNVGCMTRLFFFLFFVISECYMLTSMAYDRYVAICNPLLYKVTMSHQVCSMLTFAAYIMGLAGATAHTGCMLRLTFCSANIINHYLCDILPLLQLSCTSTYVNEVVVLIVVGTNITVPSCTILISYVFIVTSILHIKSTQGRSKAFSTCSSHVIALSLFFGSAAFMYIKYSSGSMEQGKVSSVFYTNVVPMLNPLIYSLRNKDVKVALRKALIKIQRRNIF</sequence>
<evidence type="ECO:0000255" key="1"/>
<evidence type="ECO:0000255" key="2">
    <source>
        <dbReference type="PROSITE-ProRule" id="PRU00521"/>
    </source>
</evidence>
<evidence type="ECO:0000305" key="3"/>
<gene>
    <name type="primary">OR8B2</name>
</gene>
<keyword id="KW-1003">Cell membrane</keyword>
<keyword id="KW-1015">Disulfide bond</keyword>
<keyword id="KW-0297">G-protein coupled receptor</keyword>
<keyword id="KW-0325">Glycoprotein</keyword>
<keyword id="KW-0472">Membrane</keyword>
<keyword id="KW-0552">Olfaction</keyword>
<keyword id="KW-0675">Receptor</keyword>
<keyword id="KW-1185">Reference proteome</keyword>
<keyword id="KW-0716">Sensory transduction</keyword>
<keyword id="KW-0807">Transducer</keyword>
<keyword id="KW-0812">Transmembrane</keyword>
<keyword id="KW-1133">Transmembrane helix</keyword>
<accession>Q96RD0</accession>
<accession>Q8NGH2</accession>
<protein>
    <recommendedName>
        <fullName>Olfactory receptor 8B2</fullName>
    </recommendedName>
    <alternativeName>
        <fullName>Olfactory receptor OR11-309</fullName>
    </alternativeName>
</protein>